<dbReference type="EMBL" id="CP000482">
    <property type="protein sequence ID" value="ABK99115.1"/>
    <property type="molecule type" value="Genomic_DNA"/>
</dbReference>
<dbReference type="RefSeq" id="WP_011735408.1">
    <property type="nucleotide sequence ID" value="NC_008609.1"/>
</dbReference>
<dbReference type="SMR" id="A1AP45"/>
<dbReference type="STRING" id="338966.Ppro_1500"/>
<dbReference type="KEGG" id="ppd:Ppro_1500"/>
<dbReference type="eggNOG" id="COG0356">
    <property type="taxonomic scope" value="Bacteria"/>
</dbReference>
<dbReference type="HOGENOM" id="CLU_041018_2_2_7"/>
<dbReference type="OrthoDB" id="9789241at2"/>
<dbReference type="Proteomes" id="UP000006732">
    <property type="component" value="Chromosome"/>
</dbReference>
<dbReference type="GO" id="GO:0005886">
    <property type="term" value="C:plasma membrane"/>
    <property type="evidence" value="ECO:0007669"/>
    <property type="project" value="UniProtKB-SubCell"/>
</dbReference>
<dbReference type="GO" id="GO:0045259">
    <property type="term" value="C:proton-transporting ATP synthase complex"/>
    <property type="evidence" value="ECO:0007669"/>
    <property type="project" value="UniProtKB-KW"/>
</dbReference>
<dbReference type="GO" id="GO:0046933">
    <property type="term" value="F:proton-transporting ATP synthase activity, rotational mechanism"/>
    <property type="evidence" value="ECO:0007669"/>
    <property type="project" value="UniProtKB-UniRule"/>
</dbReference>
<dbReference type="GO" id="GO:0042777">
    <property type="term" value="P:proton motive force-driven plasma membrane ATP synthesis"/>
    <property type="evidence" value="ECO:0007669"/>
    <property type="project" value="TreeGrafter"/>
</dbReference>
<dbReference type="CDD" id="cd00310">
    <property type="entry name" value="ATP-synt_Fo_a_6"/>
    <property type="match status" value="1"/>
</dbReference>
<dbReference type="FunFam" id="1.20.120.220:FF:000006">
    <property type="entry name" value="ATP synthase subunit a"/>
    <property type="match status" value="1"/>
</dbReference>
<dbReference type="Gene3D" id="1.20.120.220">
    <property type="entry name" value="ATP synthase, F0 complex, subunit A"/>
    <property type="match status" value="1"/>
</dbReference>
<dbReference type="HAMAP" id="MF_01393">
    <property type="entry name" value="ATP_synth_a_bact"/>
    <property type="match status" value="1"/>
</dbReference>
<dbReference type="InterPro" id="IPR045082">
    <property type="entry name" value="ATP_syn_F0_a_bact/chloroplast"/>
</dbReference>
<dbReference type="InterPro" id="IPR000568">
    <property type="entry name" value="ATP_synth_F0_asu"/>
</dbReference>
<dbReference type="InterPro" id="IPR023011">
    <property type="entry name" value="ATP_synth_F0_asu_AS"/>
</dbReference>
<dbReference type="InterPro" id="IPR035908">
    <property type="entry name" value="F0_ATP_A_sf"/>
</dbReference>
<dbReference type="NCBIfam" id="TIGR01131">
    <property type="entry name" value="ATP_synt_6_or_A"/>
    <property type="match status" value="1"/>
</dbReference>
<dbReference type="PANTHER" id="PTHR42823">
    <property type="entry name" value="ATP SYNTHASE SUBUNIT A, CHLOROPLASTIC"/>
    <property type="match status" value="1"/>
</dbReference>
<dbReference type="PANTHER" id="PTHR42823:SF3">
    <property type="entry name" value="ATP SYNTHASE SUBUNIT A, CHLOROPLASTIC"/>
    <property type="match status" value="1"/>
</dbReference>
<dbReference type="Pfam" id="PF00119">
    <property type="entry name" value="ATP-synt_A"/>
    <property type="match status" value="1"/>
</dbReference>
<dbReference type="PRINTS" id="PR00123">
    <property type="entry name" value="ATPASEA"/>
</dbReference>
<dbReference type="SUPFAM" id="SSF81336">
    <property type="entry name" value="F1F0 ATP synthase subunit A"/>
    <property type="match status" value="1"/>
</dbReference>
<dbReference type="PROSITE" id="PS00449">
    <property type="entry name" value="ATPASE_A"/>
    <property type="match status" value="1"/>
</dbReference>
<gene>
    <name evidence="1" type="primary">atpB3</name>
    <name type="ordered locus">Ppro_1500</name>
</gene>
<accession>A1AP45</accession>
<name>ATP63_PELPD</name>
<sequence>MVHPFLFLEFLRKMLAPLHLSEASADAVSYTWLIIALLLLLSFLATRALKTVPGGLQNFMEIIVGGIENMVTETMGEHGRPYFPLVATIGIFVLVSNLIGLIPGFFPPTANINTTAACAIVVFLSTHVVGIKRHGIGYIKHFCGPILWLTPIMFFIEVIGHLSRPVSLTLRLFGNMNGHELVLIIFFGLAPFLVPLPMMLMGVLVSFIQAFVFMLLTMIYIQGSLEEAH</sequence>
<comment type="function">
    <text evidence="1">Key component of the proton channel; it plays a direct role in the translocation of protons across the membrane.</text>
</comment>
<comment type="subunit">
    <text evidence="1">F-type ATPases have 2 components, CF(1) - the catalytic core - and CF(0) - the membrane proton channel. CF(1) has five subunits: alpha(3), beta(3), gamma(1), delta(1), epsilon(1). CF(0) has three main subunits: a(1), b(2) and c(9-12). The alpha and beta chains form an alternating ring which encloses part of the gamma chain. CF(1) is attached to CF(0) by a central stalk formed by the gamma and epsilon chains, while a peripheral stalk is formed by the delta and b chains.</text>
</comment>
<comment type="subcellular location">
    <subcellularLocation>
        <location evidence="1">Cell inner membrane</location>
        <topology evidence="1">Multi-pass membrane protein</topology>
    </subcellularLocation>
</comment>
<comment type="similarity">
    <text evidence="1">Belongs to the ATPase A chain family.</text>
</comment>
<keyword id="KW-0066">ATP synthesis</keyword>
<keyword id="KW-0997">Cell inner membrane</keyword>
<keyword id="KW-1003">Cell membrane</keyword>
<keyword id="KW-0138">CF(0)</keyword>
<keyword id="KW-0375">Hydrogen ion transport</keyword>
<keyword id="KW-0406">Ion transport</keyword>
<keyword id="KW-0472">Membrane</keyword>
<keyword id="KW-1185">Reference proteome</keyword>
<keyword id="KW-0812">Transmembrane</keyword>
<keyword id="KW-1133">Transmembrane helix</keyword>
<keyword id="KW-0813">Transport</keyword>
<evidence type="ECO:0000255" key="1">
    <source>
        <dbReference type="HAMAP-Rule" id="MF_01393"/>
    </source>
</evidence>
<proteinExistence type="inferred from homology"/>
<protein>
    <recommendedName>
        <fullName evidence="1">ATP synthase subunit a 3</fullName>
    </recommendedName>
    <alternativeName>
        <fullName evidence="1">ATP synthase F0 sector subunit a 3</fullName>
    </alternativeName>
    <alternativeName>
        <fullName evidence="1">F-ATPase subunit 6 3</fullName>
    </alternativeName>
</protein>
<reference key="1">
    <citation type="submission" date="2006-10" db="EMBL/GenBank/DDBJ databases">
        <title>Complete sequence of chromosome of Pelobacter propionicus DSM 2379.</title>
        <authorList>
            <consortium name="US DOE Joint Genome Institute"/>
            <person name="Copeland A."/>
            <person name="Lucas S."/>
            <person name="Lapidus A."/>
            <person name="Barry K."/>
            <person name="Detter J.C."/>
            <person name="Glavina del Rio T."/>
            <person name="Hammon N."/>
            <person name="Israni S."/>
            <person name="Dalin E."/>
            <person name="Tice H."/>
            <person name="Pitluck S."/>
            <person name="Saunders E."/>
            <person name="Brettin T."/>
            <person name="Bruce D."/>
            <person name="Han C."/>
            <person name="Tapia R."/>
            <person name="Schmutz J."/>
            <person name="Larimer F."/>
            <person name="Land M."/>
            <person name="Hauser L."/>
            <person name="Kyrpides N."/>
            <person name="Kim E."/>
            <person name="Lovley D."/>
            <person name="Richardson P."/>
        </authorList>
    </citation>
    <scope>NUCLEOTIDE SEQUENCE [LARGE SCALE GENOMIC DNA]</scope>
    <source>
        <strain>DSM 2379 / NBRC 103807 / OttBd1</strain>
    </source>
</reference>
<feature type="chain" id="PRO_0000362368" description="ATP synthase subunit a 3">
    <location>
        <begin position="1"/>
        <end position="229"/>
    </location>
</feature>
<feature type="transmembrane region" description="Helical" evidence="1">
    <location>
        <begin position="25"/>
        <end position="45"/>
    </location>
</feature>
<feature type="transmembrane region" description="Helical" evidence="1">
    <location>
        <begin position="86"/>
        <end position="106"/>
    </location>
</feature>
<feature type="transmembrane region" description="Helical" evidence="1">
    <location>
        <begin position="111"/>
        <end position="131"/>
    </location>
</feature>
<feature type="transmembrane region" description="Helical" evidence="1">
    <location>
        <begin position="142"/>
        <end position="162"/>
    </location>
</feature>
<feature type="transmembrane region" description="Helical" evidence="1">
    <location>
        <begin position="181"/>
        <end position="201"/>
    </location>
</feature>
<feature type="transmembrane region" description="Helical" evidence="1">
    <location>
        <begin position="202"/>
        <end position="222"/>
    </location>
</feature>
<organism>
    <name type="scientific">Pelobacter propionicus (strain DSM 2379 / NBRC 103807 / OttBd1)</name>
    <dbReference type="NCBI Taxonomy" id="338966"/>
    <lineage>
        <taxon>Bacteria</taxon>
        <taxon>Pseudomonadati</taxon>
        <taxon>Thermodesulfobacteriota</taxon>
        <taxon>Desulfuromonadia</taxon>
        <taxon>Desulfuromonadales</taxon>
        <taxon>Desulfuromonadaceae</taxon>
        <taxon>Pelobacter</taxon>
    </lineage>
</organism>